<evidence type="ECO:0000250" key="1"/>
<evidence type="ECO:0000250" key="2">
    <source>
        <dbReference type="UniProtKB" id="Q58A65"/>
    </source>
</evidence>
<evidence type="ECO:0000255" key="3"/>
<evidence type="ECO:0000255" key="4">
    <source>
        <dbReference type="PROSITE-ProRule" id="PRU01112"/>
    </source>
</evidence>
<evidence type="ECO:0000255" key="5">
    <source>
        <dbReference type="PROSITE-ProRule" id="PRU01113"/>
    </source>
</evidence>
<evidence type="ECO:0000256" key="6">
    <source>
        <dbReference type="SAM" id="MobiDB-lite"/>
    </source>
</evidence>
<evidence type="ECO:0000269" key="7">
    <source>
    </source>
</evidence>
<evidence type="ECO:0000269" key="8">
    <source>
    </source>
</evidence>
<evidence type="ECO:0000269" key="9">
    <source>
    </source>
</evidence>
<evidence type="ECO:0000269" key="10">
    <source>
    </source>
</evidence>
<evidence type="ECO:0000269" key="11">
    <source>
    </source>
</evidence>
<evidence type="ECO:0000269" key="12">
    <source>
    </source>
</evidence>
<evidence type="ECO:0000269" key="13">
    <source>
    </source>
</evidence>
<evidence type="ECO:0000303" key="14">
    <source>
    </source>
</evidence>
<evidence type="ECO:0000303" key="15">
    <source>
    </source>
</evidence>
<evidence type="ECO:0000303" key="16">
    <source>
    </source>
</evidence>
<evidence type="ECO:0000303" key="17">
    <source>
    </source>
</evidence>
<evidence type="ECO:0000303" key="18">
    <source>
    </source>
</evidence>
<evidence type="ECO:0000303" key="19">
    <source>
    </source>
</evidence>
<evidence type="ECO:0000305" key="20"/>
<evidence type="ECO:0000312" key="21">
    <source>
        <dbReference type="HGNC" id="HGNC:14524"/>
    </source>
</evidence>
<evidence type="ECO:0007744" key="22">
    <source>
    </source>
</evidence>
<evidence type="ECO:0007744" key="23">
    <source>
    </source>
</evidence>
<evidence type="ECO:0007744" key="24">
    <source>
    </source>
</evidence>
<evidence type="ECO:0007744" key="25">
    <source>
    </source>
</evidence>
<evidence type="ECO:0007744" key="26">
    <source>
    </source>
</evidence>
<evidence type="ECO:0007744" key="27">
    <source>
    </source>
</evidence>
<evidence type="ECO:0007744" key="28">
    <source>
    </source>
</evidence>
<evidence type="ECO:0007744" key="29">
    <source>
    </source>
</evidence>
<evidence type="ECO:0007744" key="30">
    <source>
    </source>
</evidence>
<evidence type="ECO:0007744" key="31">
    <source>
    </source>
</evidence>
<evidence type="ECO:0007829" key="32">
    <source>
        <dbReference type="PDB" id="2W83"/>
    </source>
</evidence>
<gene>
    <name evidence="21" type="primary">SPAG9</name>
    <name type="synonym">HSS</name>
    <name type="synonym">KIAA0516</name>
    <name type="synonym">MAPK8IP4</name>
    <name type="synonym">SYD1</name>
    <name type="ORF">HLC6</name>
</gene>
<accession>O60271</accession>
<accession>A6H8U5</accession>
<accession>A8MSX0</accession>
<accession>B4DHH2</accession>
<accession>O60905</accession>
<accession>Q3KQU8</accession>
<accession>Q3MKM7</accession>
<accession>Q86WC7</accession>
<accession>Q86WC8</accession>
<accession>Q8IZX7</accession>
<accession>Q96II0</accession>
<accession>Q9H811</accession>
<organism>
    <name type="scientific">Homo sapiens</name>
    <name type="common">Human</name>
    <dbReference type="NCBI Taxonomy" id="9606"/>
    <lineage>
        <taxon>Eukaryota</taxon>
        <taxon>Metazoa</taxon>
        <taxon>Chordata</taxon>
        <taxon>Craniata</taxon>
        <taxon>Vertebrata</taxon>
        <taxon>Euteleostomi</taxon>
        <taxon>Mammalia</taxon>
        <taxon>Eutheria</taxon>
        <taxon>Euarchontoglires</taxon>
        <taxon>Primates</taxon>
        <taxon>Haplorrhini</taxon>
        <taxon>Catarrhini</taxon>
        <taxon>Hominidae</taxon>
        <taxon>Homo</taxon>
    </lineage>
</organism>
<sequence length="1321" mass="146205">MELEDGVVYQEEPGGSGAVMSERVSGLAGSIYREFERLIGRYDEEVVKELMPLVVAVLENLDSVFAQDQEHQVELELLRDDNEQLITQYEREKALRKHAEEKFIEFEDSQEQEKKDLQTRVESLESQTRQLELKAKNYADQISRLEEREAELKKEYNALHQRHTEMIHNYMEHLERTKLHQLSGSDQLESTAHSRIRKERPISLGIFPLPAGDGLLTPDAQKGGETPGSEQWKFQELSQPRSHTSLKVSNSPEPQKAVEQEDELSDVSQGGSKATTPASTANSDVATIPTDTPLKEENEGFVKVTDAPNKSEISKHIEVQVAQETRNVSTGSAENEEKSEVQAIIESTPELDMDKDLSGYKGSSTPTKGIENKAFDRNTESLFEELSSAGSGLIGDVDEGADLLGMGREVENLILENTQLLETKNALNIVKNDLIAKVDELTCEKDVLQGELEAVKQAKLKLEEKNRELEEELRKARAEAEDARQKAKDDDDSDIPTAQRKRFTRVEMARVLMERNQYKERLMELQEAVRWTEMIRASRENPAMQEKKRSSIWQFFSRLFSSSSNTTKKPEPPVNLKYNAPTSHVTPSVKKRSSTLSQLPGDKSKAFDFLSEETEASLASRREQKREQYRQVKAHVQKEDGRVQAFGWSLPQKYKQVTNGQGENKMKNLPVPVYLRPLDEKDTSMKLWCAVGVNLSGGKTRDGGSVVGASVFYKDVAGLDTEGSKQRSASQSSLDKLDQELKEQQKELKNQEELSSLVWICTSTHSATKVLIIDAVQPGNILDSFTVCNSHVLCIASVPGARETDYPAGEDLSESGQVDKASLCGSMTSNSSAETDSLLGGITVVGCSAEGVTGAATSPSTNGASPVMDKPPEMEAENSEVDENVPTAEEATEATEGNAGSAEDTVDISQTGVYTEHVFTDPLGVQIPEDLSPVYQSSNDSDAYKDQISVLPNEQDLVREEAQKMSSLLPTMWLGAQNGCLYVHSSVAQWRKCLHSIKLKDSILSIVHVKGIVLVALADGTLAIFHRGVDGQWDLSNYHLLDLGRPHHSIRCMTVVHDKVWCGYRNKIYVVQPKAMKIEKSFDAHPRKESQVRQLAWVGDGVWVSIRLDSTLRLYHAHTYQHLQDVDIEPYVSKMLGTGKLGFSFVRITALMVSCNRLWVGTGNGVIISIPLTETNKTSGVPGNRPGSVIRVYGDENSDKVTPGTFIPYCSMAHAQLCFHGHRDAVKFFVAVPGQVISPQSSSSGTDLTGDKAGPSAQEPGSQTPLKSMLVISGGEGYIDFRMGDEGGESELLGEDLPLEPSVTKAERSHLIVWQVMYGNE</sequence>
<dbReference type="EMBL" id="AF327452">
    <property type="protein sequence ID" value="AAN61565.1"/>
    <property type="molecule type" value="mRNA"/>
</dbReference>
<dbReference type="EMBL" id="AY850123">
    <property type="protein sequence ID" value="AAX47276.1"/>
    <property type="molecule type" value="mRNA"/>
</dbReference>
<dbReference type="EMBL" id="AB011088">
    <property type="protein sequence ID" value="BAA25442.3"/>
    <property type="status" value="ALT_INIT"/>
    <property type="molecule type" value="mRNA"/>
</dbReference>
<dbReference type="EMBL" id="AK024068">
    <property type="protein sequence ID" value="BAB14812.1"/>
    <property type="status" value="ALT_SEQ"/>
    <property type="molecule type" value="mRNA"/>
</dbReference>
<dbReference type="EMBL" id="AK295098">
    <property type="protein sequence ID" value="BAG58134.1"/>
    <property type="molecule type" value="mRNA"/>
</dbReference>
<dbReference type="EMBL" id="AK302789">
    <property type="protein sequence ID" value="BAG63993.1"/>
    <property type="molecule type" value="mRNA"/>
</dbReference>
<dbReference type="EMBL" id="AC005920">
    <property type="status" value="NOT_ANNOTATED_CDS"/>
    <property type="molecule type" value="Genomic_DNA"/>
</dbReference>
<dbReference type="EMBL" id="AC005839">
    <property type="status" value="NOT_ANNOTATED_CDS"/>
    <property type="molecule type" value="Genomic_DNA"/>
</dbReference>
<dbReference type="EMBL" id="BC007524">
    <property type="protein sequence ID" value="AAH07524.1"/>
    <property type="status" value="ALT_SEQ"/>
    <property type="molecule type" value="mRNA"/>
</dbReference>
<dbReference type="EMBL" id="BC059946">
    <property type="protein sequence ID" value="AAH59946.1"/>
    <property type="status" value="ALT_SEQ"/>
    <property type="molecule type" value="mRNA"/>
</dbReference>
<dbReference type="EMBL" id="BC106048">
    <property type="protein sequence ID" value="AAI06049.1"/>
    <property type="status" value="ALT_SEQ"/>
    <property type="molecule type" value="mRNA"/>
</dbReference>
<dbReference type="EMBL" id="BC146755">
    <property type="protein sequence ID" value="AAI46756.1"/>
    <property type="molecule type" value="mRNA"/>
</dbReference>
<dbReference type="EMBL" id="BC153878">
    <property type="protein sequence ID" value="AAI53879.1"/>
    <property type="molecule type" value="mRNA"/>
</dbReference>
<dbReference type="EMBL" id="X91879">
    <property type="protein sequence ID" value="CAA62987.1"/>
    <property type="status" value="ALT_INIT"/>
    <property type="molecule type" value="mRNA"/>
</dbReference>
<dbReference type="EMBL" id="AY219897">
    <property type="protein sequence ID" value="AAO66462.1"/>
    <property type="status" value="ALT_INIT"/>
    <property type="molecule type" value="mRNA"/>
</dbReference>
<dbReference type="EMBL" id="AY219898">
    <property type="protein sequence ID" value="AAO66463.1"/>
    <property type="molecule type" value="mRNA"/>
</dbReference>
<dbReference type="CCDS" id="CCDS11577.1">
    <molecule id="O60271-4"/>
</dbReference>
<dbReference type="CCDS" id="CCDS45740.1">
    <molecule id="O60271-1"/>
</dbReference>
<dbReference type="CCDS" id="CCDS58577.1">
    <molecule id="O60271-9"/>
</dbReference>
<dbReference type="CCDS" id="CCDS58578.1">
    <molecule id="O60271-2"/>
</dbReference>
<dbReference type="PIR" id="JC5958">
    <property type="entry name" value="JC5958"/>
</dbReference>
<dbReference type="RefSeq" id="NP_001123999.1">
    <molecule id="O60271-2"/>
    <property type="nucleotide sequence ID" value="NM_001130527.3"/>
</dbReference>
<dbReference type="RefSeq" id="NP_001124000.1">
    <molecule id="O60271-1"/>
    <property type="nucleotide sequence ID" value="NM_001130528.3"/>
</dbReference>
<dbReference type="RefSeq" id="NP_001238900.1">
    <molecule id="O60271-9"/>
    <property type="nucleotide sequence ID" value="NM_001251971.2"/>
</dbReference>
<dbReference type="RefSeq" id="NP_003962.3">
    <molecule id="O60271-4"/>
    <property type="nucleotide sequence ID" value="NM_003971.5"/>
</dbReference>
<dbReference type="PDB" id="2W83">
    <property type="method" value="X-ray"/>
    <property type="resolution" value="1.93 A"/>
    <property type="chains" value="C/D=406-476"/>
</dbReference>
<dbReference type="PDBsum" id="2W83"/>
<dbReference type="SMR" id="O60271"/>
<dbReference type="BioGRID" id="114505">
    <property type="interactions" value="309"/>
</dbReference>
<dbReference type="CORUM" id="O60271"/>
<dbReference type="FunCoup" id="O60271">
    <property type="interactions" value="3490"/>
</dbReference>
<dbReference type="IntAct" id="O60271">
    <property type="interactions" value="97"/>
</dbReference>
<dbReference type="MINT" id="O60271"/>
<dbReference type="STRING" id="9606.ENSP00000262013"/>
<dbReference type="GlyGen" id="O60271">
    <property type="glycosylation" value="4 sites, 1 N-linked glycan (1 site), 1 O-linked glycan (2 sites)"/>
</dbReference>
<dbReference type="iPTMnet" id="O60271"/>
<dbReference type="MetOSite" id="O60271"/>
<dbReference type="PhosphoSitePlus" id="O60271"/>
<dbReference type="SwissPalm" id="O60271"/>
<dbReference type="BioMuta" id="SPAG9"/>
<dbReference type="jPOST" id="O60271"/>
<dbReference type="MassIVE" id="O60271"/>
<dbReference type="PaxDb" id="9606-ENSP00000262013"/>
<dbReference type="PeptideAtlas" id="O60271"/>
<dbReference type="ProteomicsDB" id="49302">
    <molecule id="O60271-1"/>
</dbReference>
<dbReference type="ProteomicsDB" id="49303">
    <molecule id="O60271-2"/>
</dbReference>
<dbReference type="ProteomicsDB" id="49304">
    <molecule id="O60271-3"/>
</dbReference>
<dbReference type="ProteomicsDB" id="49305">
    <molecule id="O60271-4"/>
</dbReference>
<dbReference type="ProteomicsDB" id="49306">
    <molecule id="O60271-5"/>
</dbReference>
<dbReference type="ProteomicsDB" id="49307">
    <molecule id="O60271-9"/>
</dbReference>
<dbReference type="Pumba" id="O60271"/>
<dbReference type="Antibodypedia" id="30731">
    <property type="antibodies" value="211 antibodies from 37 providers"/>
</dbReference>
<dbReference type="DNASU" id="9043"/>
<dbReference type="Ensembl" id="ENST00000262013.12">
    <molecule id="O60271-1"/>
    <property type="protein sequence ID" value="ENSP00000262013.7"/>
    <property type="gene ID" value="ENSG00000008294.22"/>
</dbReference>
<dbReference type="Ensembl" id="ENST00000357122.8">
    <molecule id="O60271-4"/>
    <property type="protein sequence ID" value="ENSP00000349636.4"/>
    <property type="gene ID" value="ENSG00000008294.22"/>
</dbReference>
<dbReference type="Ensembl" id="ENST00000505279.5">
    <molecule id="O60271-2"/>
    <property type="protein sequence ID" value="ENSP00000426900.1"/>
    <property type="gene ID" value="ENSG00000008294.22"/>
</dbReference>
<dbReference type="Ensembl" id="ENST00000510283.5">
    <molecule id="O60271-9"/>
    <property type="protein sequence ID" value="ENSP00000423165.1"/>
    <property type="gene ID" value="ENSG00000008294.22"/>
</dbReference>
<dbReference type="GeneID" id="9043"/>
<dbReference type="KEGG" id="hsa:9043"/>
<dbReference type="MANE-Select" id="ENST00000262013.12">
    <property type="protein sequence ID" value="ENSP00000262013.7"/>
    <property type="RefSeq nucleotide sequence ID" value="NM_001130528.3"/>
    <property type="RefSeq protein sequence ID" value="NP_001124000.1"/>
</dbReference>
<dbReference type="UCSC" id="uc002ita.4">
    <molecule id="O60271-1"/>
    <property type="organism name" value="human"/>
</dbReference>
<dbReference type="AGR" id="HGNC:14524"/>
<dbReference type="CTD" id="9043"/>
<dbReference type="DisGeNET" id="9043"/>
<dbReference type="GeneCards" id="SPAG9"/>
<dbReference type="HGNC" id="HGNC:14524">
    <property type="gene designation" value="SPAG9"/>
</dbReference>
<dbReference type="HPA" id="ENSG00000008294">
    <property type="expression patterns" value="Low tissue specificity"/>
</dbReference>
<dbReference type="MIM" id="605430">
    <property type="type" value="gene"/>
</dbReference>
<dbReference type="neXtProt" id="NX_O60271"/>
<dbReference type="OpenTargets" id="ENSG00000008294"/>
<dbReference type="PharmGKB" id="PA37890"/>
<dbReference type="VEuPathDB" id="HostDB:ENSG00000008294"/>
<dbReference type="eggNOG" id="KOG2077">
    <property type="taxonomic scope" value="Eukaryota"/>
</dbReference>
<dbReference type="GeneTree" id="ENSGT00940000153496"/>
<dbReference type="HOGENOM" id="CLU_003841_0_0_1"/>
<dbReference type="InParanoid" id="O60271"/>
<dbReference type="OMA" id="DXASREN"/>
<dbReference type="OrthoDB" id="10256043at2759"/>
<dbReference type="PAN-GO" id="O60271">
    <property type="GO annotations" value="6 GO annotations based on evolutionary models"/>
</dbReference>
<dbReference type="PhylomeDB" id="O60271"/>
<dbReference type="TreeFam" id="TF313096"/>
<dbReference type="PathwayCommons" id="O60271"/>
<dbReference type="Reactome" id="R-HSA-525793">
    <property type="pathway name" value="Myogenesis"/>
</dbReference>
<dbReference type="SignaLink" id="O60271"/>
<dbReference type="SIGNOR" id="O60271"/>
<dbReference type="BioGRID-ORCS" id="9043">
    <property type="hits" value="27 hits in 1157 CRISPR screens"/>
</dbReference>
<dbReference type="ChiTaRS" id="SPAG9">
    <property type="organism name" value="human"/>
</dbReference>
<dbReference type="EvolutionaryTrace" id="O60271"/>
<dbReference type="GeneWiki" id="SPAG9"/>
<dbReference type="GenomeRNAi" id="9043"/>
<dbReference type="Pharos" id="O60271">
    <property type="development level" value="Tbio"/>
</dbReference>
<dbReference type="PRO" id="PR:O60271"/>
<dbReference type="Proteomes" id="UP000005640">
    <property type="component" value="Chromosome 17"/>
</dbReference>
<dbReference type="RNAct" id="O60271">
    <property type="molecule type" value="protein"/>
</dbReference>
<dbReference type="Bgee" id="ENSG00000008294">
    <property type="expression patterns" value="Expressed in calcaneal tendon and 204 other cell types or tissues"/>
</dbReference>
<dbReference type="ExpressionAtlas" id="O60271">
    <property type="expression patterns" value="baseline and differential"/>
</dbReference>
<dbReference type="GO" id="GO:0001669">
    <property type="term" value="C:acrosomal vesicle"/>
    <property type="evidence" value="ECO:0007669"/>
    <property type="project" value="UniProtKB-SubCell"/>
</dbReference>
<dbReference type="GO" id="GO:0034451">
    <property type="term" value="C:centriolar satellite"/>
    <property type="evidence" value="ECO:0000314"/>
    <property type="project" value="HPA"/>
</dbReference>
<dbReference type="GO" id="GO:0005737">
    <property type="term" value="C:cytoplasm"/>
    <property type="evidence" value="ECO:0000318"/>
    <property type="project" value="GO_Central"/>
</dbReference>
<dbReference type="GO" id="GO:0005829">
    <property type="term" value="C:cytosol"/>
    <property type="evidence" value="ECO:0000314"/>
    <property type="project" value="HPA"/>
</dbReference>
<dbReference type="GO" id="GO:0070062">
    <property type="term" value="C:extracellular exosome"/>
    <property type="evidence" value="ECO:0007005"/>
    <property type="project" value="UniProtKB"/>
</dbReference>
<dbReference type="GO" id="GO:0005765">
    <property type="term" value="C:lysosomal membrane"/>
    <property type="evidence" value="ECO:0000314"/>
    <property type="project" value="UniProtKB"/>
</dbReference>
<dbReference type="GO" id="GO:0048471">
    <property type="term" value="C:perinuclear region of cytoplasm"/>
    <property type="evidence" value="ECO:0007669"/>
    <property type="project" value="UniProtKB-SubCell"/>
</dbReference>
<dbReference type="GO" id="GO:0042802">
    <property type="term" value="F:identical protein binding"/>
    <property type="evidence" value="ECO:0007669"/>
    <property type="project" value="Ensembl"/>
</dbReference>
<dbReference type="GO" id="GO:0008432">
    <property type="term" value="F:JUN kinase binding"/>
    <property type="evidence" value="ECO:0000318"/>
    <property type="project" value="GO_Central"/>
</dbReference>
<dbReference type="GO" id="GO:0019894">
    <property type="term" value="F:kinesin binding"/>
    <property type="evidence" value="ECO:0000318"/>
    <property type="project" value="GO_Central"/>
</dbReference>
<dbReference type="GO" id="GO:0005078">
    <property type="term" value="F:MAP-kinase scaffold activity"/>
    <property type="evidence" value="ECO:0000318"/>
    <property type="project" value="GO_Central"/>
</dbReference>
<dbReference type="GO" id="GO:0030159">
    <property type="term" value="F:signaling receptor complex adaptor activity"/>
    <property type="evidence" value="ECO:0000318"/>
    <property type="project" value="GO_Central"/>
</dbReference>
<dbReference type="GO" id="GO:0032418">
    <property type="term" value="P:lysosome localization"/>
    <property type="evidence" value="ECO:0000315"/>
    <property type="project" value="UniProtKB"/>
</dbReference>
<dbReference type="GO" id="GO:1903860">
    <property type="term" value="P:negative regulation of dendrite extension"/>
    <property type="evidence" value="ECO:0007669"/>
    <property type="project" value="Ensembl"/>
</dbReference>
<dbReference type="GO" id="GO:0045665">
    <property type="term" value="P:negative regulation of neuron differentiation"/>
    <property type="evidence" value="ECO:0007669"/>
    <property type="project" value="Ensembl"/>
</dbReference>
<dbReference type="GO" id="GO:0030335">
    <property type="term" value="P:positive regulation of cell migration"/>
    <property type="evidence" value="ECO:0000315"/>
    <property type="project" value="UniProtKB"/>
</dbReference>
<dbReference type="GO" id="GO:0043410">
    <property type="term" value="P:positive regulation of MAPK cascade"/>
    <property type="evidence" value="ECO:0007669"/>
    <property type="project" value="Ensembl"/>
</dbReference>
<dbReference type="GO" id="GO:0045666">
    <property type="term" value="P:positive regulation of neuron differentiation"/>
    <property type="evidence" value="ECO:0007669"/>
    <property type="project" value="Ensembl"/>
</dbReference>
<dbReference type="GO" id="GO:0042147">
    <property type="term" value="P:retrograde transport, endosome to Golgi"/>
    <property type="evidence" value="ECO:0000314"/>
    <property type="project" value="MGI"/>
</dbReference>
<dbReference type="GO" id="GO:0051146">
    <property type="term" value="P:striated muscle cell differentiation"/>
    <property type="evidence" value="ECO:0007669"/>
    <property type="project" value="Ensembl"/>
</dbReference>
<dbReference type="GO" id="GO:0016192">
    <property type="term" value="P:vesicle-mediated transport"/>
    <property type="evidence" value="ECO:0000318"/>
    <property type="project" value="GO_Central"/>
</dbReference>
<dbReference type="FunFam" id="1.20.58.1770:FF:000001">
    <property type="entry name" value="C-Jun-amino-terminal kinase-interacting protein 3 isoform X1"/>
    <property type="match status" value="1"/>
</dbReference>
<dbReference type="FunFam" id="1.20.5.1000:FF:000001">
    <property type="entry name" value="C-Jun-amino-terminal kinase-interacting protein 3 isoform X2"/>
    <property type="match status" value="1"/>
</dbReference>
<dbReference type="FunFam" id="2.130.10.10:FF:000700">
    <property type="entry name" value="Sperm-associated antigen 9a"/>
    <property type="match status" value="1"/>
</dbReference>
<dbReference type="Gene3D" id="1.20.58.1770">
    <property type="match status" value="1"/>
</dbReference>
<dbReference type="Gene3D" id="1.20.5.1000">
    <property type="entry name" value="arf6 gtpase in complex with a specific effector, jip4"/>
    <property type="match status" value="1"/>
</dbReference>
<dbReference type="Gene3D" id="2.130.10.10">
    <property type="entry name" value="YVTN repeat-like/Quinoprotein amine dehydrogenase"/>
    <property type="match status" value="1"/>
</dbReference>
<dbReference type="InterPro" id="IPR039911">
    <property type="entry name" value="JIP3/JIP4"/>
</dbReference>
<dbReference type="InterPro" id="IPR032486">
    <property type="entry name" value="JIP_LZII"/>
</dbReference>
<dbReference type="InterPro" id="IPR034743">
    <property type="entry name" value="RH1"/>
</dbReference>
<dbReference type="InterPro" id="IPR034744">
    <property type="entry name" value="RH2"/>
</dbReference>
<dbReference type="InterPro" id="IPR015943">
    <property type="entry name" value="WD40/YVTN_repeat-like_dom_sf"/>
</dbReference>
<dbReference type="InterPro" id="IPR036322">
    <property type="entry name" value="WD40_repeat_dom_sf"/>
</dbReference>
<dbReference type="PANTHER" id="PTHR13886:SF2">
    <property type="entry name" value="C-JUN-AMINO-TERMINAL KINASE-INTERACTING PROTEIN 4"/>
    <property type="match status" value="1"/>
</dbReference>
<dbReference type="PANTHER" id="PTHR13886">
    <property type="entry name" value="JNK/SAPK-ASSOCIATED PROTEIN"/>
    <property type="match status" value="1"/>
</dbReference>
<dbReference type="Pfam" id="PF16471">
    <property type="entry name" value="JIP_LZII"/>
    <property type="match status" value="1"/>
</dbReference>
<dbReference type="Pfam" id="PF09744">
    <property type="entry name" value="RH1"/>
    <property type="match status" value="1"/>
</dbReference>
<dbReference type="Pfam" id="PF19056">
    <property type="entry name" value="WD40_2"/>
    <property type="match status" value="1"/>
</dbReference>
<dbReference type="SUPFAM" id="SSF50978">
    <property type="entry name" value="WD40 repeat-like"/>
    <property type="match status" value="1"/>
</dbReference>
<dbReference type="PROSITE" id="PS51776">
    <property type="entry name" value="RH1"/>
    <property type="match status" value="1"/>
</dbReference>
<dbReference type="PROSITE" id="PS51777">
    <property type="entry name" value="RH2"/>
    <property type="match status" value="1"/>
</dbReference>
<reference key="1">
    <citation type="journal article" date="2002" name="Proc. Natl. Acad. Sci. U.S.A.">
        <title>JLP: a scaffolding protein that tethers JNK/p38MAPK signaling modules and transcription factors.</title>
        <authorList>
            <person name="Lee C.M."/>
            <person name="Onesime D."/>
            <person name="Reddy C.D."/>
            <person name="Dhanasekaran N."/>
            <person name="Reddy E.P."/>
        </authorList>
    </citation>
    <scope>NUCLEOTIDE SEQUENCE [MRNA] (ISOFORM 2)</scope>
    <source>
        <tissue>Liver</tissue>
    </source>
</reference>
<reference key="2">
    <citation type="journal article" date="2005" name="Biochem. Biophys. Res. Commun.">
        <title>Humoral detection of leukaemia-associated antigens in presentation acute myeloid leukaemia.</title>
        <authorList>
            <person name="Guinn B.-A."/>
            <person name="Bland E.A."/>
            <person name="Lodi U."/>
            <person name="Liggins A.P."/>
            <person name="Tobal K."/>
            <person name="Petters S."/>
            <person name="Wells J.W."/>
            <person name="Banham A.H."/>
            <person name="Mufti G.J."/>
        </authorList>
    </citation>
    <scope>NUCLEOTIDE SEQUENCE [MRNA] (ISOFORM 4)</scope>
    <scope>TISSUE SPECIFICITY</scope>
</reference>
<reference key="3">
    <citation type="journal article" date="1998" name="DNA Res.">
        <title>Prediction of the coding sequences of unidentified human genes. IX. The complete sequences of 100 new cDNA clones from brain which can code for large proteins in vitro.</title>
        <authorList>
            <person name="Nagase T."/>
            <person name="Ishikawa K."/>
            <person name="Miyajima N."/>
            <person name="Tanaka A."/>
            <person name="Kotani H."/>
            <person name="Nomura N."/>
            <person name="Ohara O."/>
        </authorList>
    </citation>
    <scope>NUCLEOTIDE SEQUENCE [LARGE SCALE MRNA] (ISOFORM 1)</scope>
    <source>
        <tissue>Brain</tissue>
    </source>
</reference>
<reference key="4">
    <citation type="journal article" date="2002" name="DNA Res.">
        <title>Construction of expression-ready cDNA clones for KIAA genes: manual curation of 330 KIAA cDNA clones.</title>
        <authorList>
            <person name="Nakajima D."/>
            <person name="Okazaki N."/>
            <person name="Yamakawa H."/>
            <person name="Kikuno R."/>
            <person name="Ohara O."/>
            <person name="Nagase T."/>
        </authorList>
    </citation>
    <scope>SEQUENCE REVISION</scope>
</reference>
<reference key="5">
    <citation type="journal article" date="2004" name="Nat. Genet.">
        <title>Complete sequencing and characterization of 21,243 full-length human cDNAs.</title>
        <authorList>
            <person name="Ota T."/>
            <person name="Suzuki Y."/>
            <person name="Nishikawa T."/>
            <person name="Otsuki T."/>
            <person name="Sugiyama T."/>
            <person name="Irie R."/>
            <person name="Wakamatsu A."/>
            <person name="Hayashi K."/>
            <person name="Sato H."/>
            <person name="Nagai K."/>
            <person name="Kimura K."/>
            <person name="Makita H."/>
            <person name="Sekine M."/>
            <person name="Obayashi M."/>
            <person name="Nishi T."/>
            <person name="Shibahara T."/>
            <person name="Tanaka T."/>
            <person name="Ishii S."/>
            <person name="Yamamoto J."/>
            <person name="Saito K."/>
            <person name="Kawai Y."/>
            <person name="Isono Y."/>
            <person name="Nakamura Y."/>
            <person name="Nagahari K."/>
            <person name="Murakami K."/>
            <person name="Yasuda T."/>
            <person name="Iwayanagi T."/>
            <person name="Wagatsuma M."/>
            <person name="Shiratori A."/>
            <person name="Sudo H."/>
            <person name="Hosoiri T."/>
            <person name="Kaku Y."/>
            <person name="Kodaira H."/>
            <person name="Kondo H."/>
            <person name="Sugawara M."/>
            <person name="Takahashi M."/>
            <person name="Kanda K."/>
            <person name="Yokoi T."/>
            <person name="Furuya T."/>
            <person name="Kikkawa E."/>
            <person name="Omura Y."/>
            <person name="Abe K."/>
            <person name="Kamihara K."/>
            <person name="Katsuta N."/>
            <person name="Sato K."/>
            <person name="Tanikawa M."/>
            <person name="Yamazaki M."/>
            <person name="Ninomiya K."/>
            <person name="Ishibashi T."/>
            <person name="Yamashita H."/>
            <person name="Murakawa K."/>
            <person name="Fujimori K."/>
            <person name="Tanai H."/>
            <person name="Kimata M."/>
            <person name="Watanabe M."/>
            <person name="Hiraoka S."/>
            <person name="Chiba Y."/>
            <person name="Ishida S."/>
            <person name="Ono Y."/>
            <person name="Takiguchi S."/>
            <person name="Watanabe S."/>
            <person name="Yosida M."/>
            <person name="Hotuta T."/>
            <person name="Kusano J."/>
            <person name="Kanehori K."/>
            <person name="Takahashi-Fujii A."/>
            <person name="Hara H."/>
            <person name="Tanase T.-O."/>
            <person name="Nomura Y."/>
            <person name="Togiya S."/>
            <person name="Komai F."/>
            <person name="Hara R."/>
            <person name="Takeuchi K."/>
            <person name="Arita M."/>
            <person name="Imose N."/>
            <person name="Musashino K."/>
            <person name="Yuuki H."/>
            <person name="Oshima A."/>
            <person name="Sasaki N."/>
            <person name="Aotsuka S."/>
            <person name="Yoshikawa Y."/>
            <person name="Matsunawa H."/>
            <person name="Ichihara T."/>
            <person name="Shiohata N."/>
            <person name="Sano S."/>
            <person name="Moriya S."/>
            <person name="Momiyama H."/>
            <person name="Satoh N."/>
            <person name="Takami S."/>
            <person name="Terashima Y."/>
            <person name="Suzuki O."/>
            <person name="Nakagawa S."/>
            <person name="Senoh A."/>
            <person name="Mizoguchi H."/>
            <person name="Goto Y."/>
            <person name="Shimizu F."/>
            <person name="Wakebe H."/>
            <person name="Hishigaki H."/>
            <person name="Watanabe T."/>
            <person name="Sugiyama A."/>
            <person name="Takemoto M."/>
            <person name="Kawakami B."/>
            <person name="Yamazaki M."/>
            <person name="Watanabe K."/>
            <person name="Kumagai A."/>
            <person name="Itakura S."/>
            <person name="Fukuzumi Y."/>
            <person name="Fujimori Y."/>
            <person name="Komiyama M."/>
            <person name="Tashiro H."/>
            <person name="Tanigami A."/>
            <person name="Fujiwara T."/>
            <person name="Ono T."/>
            <person name="Yamada K."/>
            <person name="Fujii Y."/>
            <person name="Ozaki K."/>
            <person name="Hirao M."/>
            <person name="Ohmori Y."/>
            <person name="Kawabata A."/>
            <person name="Hikiji T."/>
            <person name="Kobatake N."/>
            <person name="Inagaki H."/>
            <person name="Ikema Y."/>
            <person name="Okamoto S."/>
            <person name="Okitani R."/>
            <person name="Kawakami T."/>
            <person name="Noguchi S."/>
            <person name="Itoh T."/>
            <person name="Shigeta K."/>
            <person name="Senba T."/>
            <person name="Matsumura K."/>
            <person name="Nakajima Y."/>
            <person name="Mizuno T."/>
            <person name="Morinaga M."/>
            <person name="Sasaki M."/>
            <person name="Togashi T."/>
            <person name="Oyama M."/>
            <person name="Hata H."/>
            <person name="Watanabe M."/>
            <person name="Komatsu T."/>
            <person name="Mizushima-Sugano J."/>
            <person name="Satoh T."/>
            <person name="Shirai Y."/>
            <person name="Takahashi Y."/>
            <person name="Nakagawa K."/>
            <person name="Okumura K."/>
            <person name="Nagase T."/>
            <person name="Nomura N."/>
            <person name="Kikuchi H."/>
            <person name="Masuho Y."/>
            <person name="Yamashita R."/>
            <person name="Nakai K."/>
            <person name="Yada T."/>
            <person name="Nakamura Y."/>
            <person name="Ohara O."/>
            <person name="Isogai T."/>
            <person name="Sugano S."/>
        </authorList>
    </citation>
    <scope>NUCLEOTIDE SEQUENCE [LARGE SCALE MRNA] (ISOFORMS 1 AND 6)</scope>
    <source>
        <tissue>Brain</tissue>
        <tissue>Testis</tissue>
    </source>
</reference>
<reference key="6">
    <citation type="journal article" date="2006" name="Nature">
        <title>DNA sequence of human chromosome 17 and analysis of rearrangement in the human lineage.</title>
        <authorList>
            <person name="Zody M.C."/>
            <person name="Garber M."/>
            <person name="Adams D.J."/>
            <person name="Sharpe T."/>
            <person name="Harrow J."/>
            <person name="Lupski J.R."/>
            <person name="Nicholson C."/>
            <person name="Searle S.M."/>
            <person name="Wilming L."/>
            <person name="Young S.K."/>
            <person name="Abouelleil A."/>
            <person name="Allen N.R."/>
            <person name="Bi W."/>
            <person name="Bloom T."/>
            <person name="Borowsky M.L."/>
            <person name="Bugalter B.E."/>
            <person name="Butler J."/>
            <person name="Chang J.L."/>
            <person name="Chen C.-K."/>
            <person name="Cook A."/>
            <person name="Corum B."/>
            <person name="Cuomo C.A."/>
            <person name="de Jong P.J."/>
            <person name="DeCaprio D."/>
            <person name="Dewar K."/>
            <person name="FitzGerald M."/>
            <person name="Gilbert J."/>
            <person name="Gibson R."/>
            <person name="Gnerre S."/>
            <person name="Goldstein S."/>
            <person name="Grafham D.V."/>
            <person name="Grocock R."/>
            <person name="Hafez N."/>
            <person name="Hagopian D.S."/>
            <person name="Hart E."/>
            <person name="Norman C.H."/>
            <person name="Humphray S."/>
            <person name="Jaffe D.B."/>
            <person name="Jones M."/>
            <person name="Kamal M."/>
            <person name="Khodiyar V.K."/>
            <person name="LaButti K."/>
            <person name="Laird G."/>
            <person name="Lehoczky J."/>
            <person name="Liu X."/>
            <person name="Lokyitsang T."/>
            <person name="Loveland J."/>
            <person name="Lui A."/>
            <person name="Macdonald P."/>
            <person name="Major J.E."/>
            <person name="Matthews L."/>
            <person name="Mauceli E."/>
            <person name="McCarroll S.A."/>
            <person name="Mihalev A.H."/>
            <person name="Mudge J."/>
            <person name="Nguyen C."/>
            <person name="Nicol R."/>
            <person name="O'Leary S.B."/>
            <person name="Osoegawa K."/>
            <person name="Schwartz D.C."/>
            <person name="Shaw-Smith C."/>
            <person name="Stankiewicz P."/>
            <person name="Steward C."/>
            <person name="Swarbreck D."/>
            <person name="Venkataraman V."/>
            <person name="Whittaker C.A."/>
            <person name="Yang X."/>
            <person name="Zimmer A.R."/>
            <person name="Bradley A."/>
            <person name="Hubbard T."/>
            <person name="Birren B.W."/>
            <person name="Rogers J."/>
            <person name="Lander E.S."/>
            <person name="Nusbaum C."/>
        </authorList>
    </citation>
    <scope>NUCLEOTIDE SEQUENCE [LARGE SCALE GENOMIC DNA]</scope>
</reference>
<reference key="7">
    <citation type="journal article" date="2004" name="Genome Res.">
        <title>The status, quality, and expansion of the NIH full-length cDNA project: the Mammalian Gene Collection (MGC).</title>
        <authorList>
            <consortium name="The MGC Project Team"/>
        </authorList>
    </citation>
    <scope>NUCLEOTIDE SEQUENCE [LARGE SCALE MRNA] (ISOFORMS 1 AND 6)</scope>
    <scope>NUCLEOTIDE SEQUENCE [LARGE SCALE MRNA] OF 1-478 (ISOFORMS 2/4/5)</scope>
    <source>
        <tissue>Eye</tissue>
        <tissue>Kidney</tissue>
    </source>
</reference>
<reference key="8">
    <citation type="journal article" date="1998" name="Biochem. Biophys. Res. Commun.">
        <title>Cloning of a novel human testis mRNA specifically expressed in testicular haploid germ cells, having unique palindromic sequences and encoding a leucine zipper dimerization motif.</title>
        <authorList>
            <person name="Shankar S."/>
            <person name="Mohapatra B."/>
            <person name="Suri A."/>
        </authorList>
    </citation>
    <scope>NUCLEOTIDE SEQUENCE [MRNA] OF 130-1321 (ISOFORM 5)</scope>
    <scope>TISSUE SPECIFICITY</scope>
    <source>
        <tissue>Testis</tissue>
    </source>
</reference>
<reference key="9">
    <citation type="journal article" date="2003" name="J. Immunol.">
        <title>A novel protein highly expressed in testis is overexpressed in systemic sclerosis fibroblasts and targeted by autoantibodies.</title>
        <authorList>
            <person name="Yasuoka H."/>
            <person name="Ihn H."/>
            <person name="Medsger T.A. Jr."/>
            <person name="Hirakata M."/>
            <person name="Kawakami Y."/>
            <person name="Ikeda Y."/>
            <person name="Kuwana M."/>
        </authorList>
    </citation>
    <scope>NUCLEOTIDE SEQUENCE [MRNA] OF 162-1321 (ISOFORM 3)</scope>
    <scope>TISSUE SPECIFICITY</scope>
    <scope>SUBCELLULAR LOCATION</scope>
    <scope>INDUCTION</scope>
    <source>
        <tissue>Testis</tissue>
    </source>
</reference>
<reference key="10">
    <citation type="journal article" date="2004" name="Anal. Chem.">
        <title>Robust phosphoproteomic profiling of tyrosine phosphorylation sites from human T cells using immobilized metal affinity chromatography and tandem mass spectrometry.</title>
        <authorList>
            <person name="Brill L.M."/>
            <person name="Salomon A.R."/>
            <person name="Ficarro S.B."/>
            <person name="Mukherji M."/>
            <person name="Stettler-Gill M."/>
            <person name="Peters E.C."/>
        </authorList>
    </citation>
    <scope>IDENTIFICATION BY MASS SPECTROMETRY [LARGE SCALE ANALYSIS]</scope>
    <source>
        <tissue>Leukemic T-cell</tissue>
    </source>
</reference>
<reference key="11">
    <citation type="journal article" date="2004" name="Nat. Cell Biol.">
        <title>A physical and functional map of the human TNF-alpha/NF-kappa B signal transduction pathway.</title>
        <authorList>
            <person name="Bouwmeester T."/>
            <person name="Bauch A."/>
            <person name="Ruffner H."/>
            <person name="Angrand P.-O."/>
            <person name="Bergamini G."/>
            <person name="Croughton K."/>
            <person name="Cruciat C."/>
            <person name="Eberhard D."/>
            <person name="Gagneur J."/>
            <person name="Ghidelli S."/>
            <person name="Hopf C."/>
            <person name="Huhse B."/>
            <person name="Mangano R."/>
            <person name="Michon A.-M."/>
            <person name="Schirle M."/>
            <person name="Schlegl J."/>
            <person name="Schwab M."/>
            <person name="Stein M.A."/>
            <person name="Bauer A."/>
            <person name="Casari G."/>
            <person name="Drewes G."/>
            <person name="Gavin A.-C."/>
            <person name="Jackson D.B."/>
            <person name="Joberty G."/>
            <person name="Neubauer G."/>
            <person name="Rick J."/>
            <person name="Kuster B."/>
            <person name="Superti-Furga G."/>
        </authorList>
    </citation>
    <scope>FUNCTION</scope>
    <scope>INTERACTION WITH NFKB1</scope>
</reference>
<reference key="12">
    <citation type="journal article" date="2005" name="Biochem. J.">
        <title>Characterization of a novel human sperm-associated antigen 9 (SPAG9) having structural homology with c-Jun N-terminal kinase-interacting protein.</title>
        <authorList>
            <person name="Jagadish N."/>
            <person name="Rana R."/>
            <person name="Selvi R."/>
            <person name="Mishra D."/>
            <person name="Garg M."/>
            <person name="Yadav S."/>
            <person name="Herr J.C."/>
            <person name="Okumura K."/>
            <person name="Hasegawa A."/>
            <person name="Koyama K."/>
            <person name="Suri A."/>
        </authorList>
    </citation>
    <scope>FUNCTION (ISOFORM 5)</scope>
    <scope>INTERACTION WITH MAPK9; MAPK10 AND MAPK8 (ISOFORM 5)</scope>
    <scope>SUBCELLULAR LOCATION (ISOFORM 5)</scope>
    <scope>IDENTIFICATION BY MASS SPECTROMETRY</scope>
</reference>
<reference key="13">
    <citation type="journal article" date="2006" name="Cell">
        <title>Global, in vivo, and site-specific phosphorylation dynamics in signaling networks.</title>
        <authorList>
            <person name="Olsen J.V."/>
            <person name="Blagoev B."/>
            <person name="Gnad F."/>
            <person name="Macek B."/>
            <person name="Kumar C."/>
            <person name="Mortensen P."/>
            <person name="Mann M."/>
        </authorList>
    </citation>
    <scope>PHOSPHORYLATION [LARGE SCALE ANALYSIS] AT SER-203 AND THR-217</scope>
    <scope>IDENTIFICATION BY MASS SPECTROMETRY [LARGE SCALE ANALYSIS]</scope>
    <source>
        <tissue>Cervix carcinoma</tissue>
    </source>
</reference>
<reference key="14">
    <citation type="journal article" date="2007" name="Science">
        <title>ATM and ATR substrate analysis reveals extensive protein networks responsive to DNA damage.</title>
        <authorList>
            <person name="Matsuoka S."/>
            <person name="Ballif B.A."/>
            <person name="Smogorzewska A."/>
            <person name="McDonald E.R. III"/>
            <person name="Hurov K.E."/>
            <person name="Luo J."/>
            <person name="Bakalarski C.E."/>
            <person name="Zhao Z."/>
            <person name="Solimini N."/>
            <person name="Lerenthal Y."/>
            <person name="Shiloh Y."/>
            <person name="Gygi S.P."/>
            <person name="Elledge S.J."/>
        </authorList>
    </citation>
    <scope>PHOSPHORYLATION [LARGE SCALE ANALYSIS] AT SER-109; SER-265; SER-272 AND THR-418</scope>
    <scope>IDENTIFICATION BY MASS SPECTROMETRY [LARGE SCALE ANALYSIS]</scope>
    <source>
        <tissue>Embryonic kidney</tissue>
    </source>
</reference>
<reference key="15">
    <citation type="journal article" date="2008" name="J. Proteome Res.">
        <title>Combining protein-based IMAC, peptide-based IMAC, and MudPIT for efficient phosphoproteomic analysis.</title>
        <authorList>
            <person name="Cantin G.T."/>
            <person name="Yi W."/>
            <person name="Lu B."/>
            <person name="Park S.K."/>
            <person name="Xu T."/>
            <person name="Lee J.-D."/>
            <person name="Yates J.R. III"/>
        </authorList>
    </citation>
    <scope>IDENTIFICATION BY MASS SPECTROMETRY [LARGE SCALE ANALYSIS]</scope>
    <source>
        <tissue>Cervix carcinoma</tissue>
    </source>
</reference>
<reference key="16">
    <citation type="journal article" date="2008" name="Proc. Natl. Acad. Sci. U.S.A.">
        <title>A quantitative atlas of mitotic phosphorylation.</title>
        <authorList>
            <person name="Dephoure N."/>
            <person name="Zhou C."/>
            <person name="Villen J."/>
            <person name="Beausoleil S.A."/>
            <person name="Bakalarski C.E."/>
            <person name="Elledge S.J."/>
            <person name="Gygi S.P."/>
        </authorList>
    </citation>
    <scope>PHOSPHORYLATION [LARGE SCALE ANALYSIS] AT SER-183; SER-185; THR-217; SER-311; SER-329; SER-332; THR-418; THR-586 AND SER-733</scope>
    <scope>IDENTIFICATION BY MASS SPECTROMETRY [LARGE SCALE ANALYSIS]</scope>
    <source>
        <tissue>Cervix carcinoma</tissue>
    </source>
</reference>
<reference key="17">
    <citation type="journal article" date="2009" name="Anal. Chem.">
        <title>Lys-N and trypsin cover complementary parts of the phosphoproteome in a refined SCX-based approach.</title>
        <authorList>
            <person name="Gauci S."/>
            <person name="Helbig A.O."/>
            <person name="Slijper M."/>
            <person name="Krijgsveld J."/>
            <person name="Heck A.J."/>
            <person name="Mohammed S."/>
        </authorList>
    </citation>
    <scope>ACETYLATION [LARGE SCALE ANALYSIS] AT MET-1</scope>
    <scope>IDENTIFICATION BY MASS SPECTROMETRY [LARGE SCALE ANALYSIS]</scope>
</reference>
<reference key="18">
    <citation type="journal article" date="2009" name="Sci. Signal.">
        <title>Quantitative phosphoproteomic analysis of T cell receptor signaling reveals system-wide modulation of protein-protein interactions.</title>
        <authorList>
            <person name="Mayya V."/>
            <person name="Lundgren D.H."/>
            <person name="Hwang S.-I."/>
            <person name="Rezaul K."/>
            <person name="Wu L."/>
            <person name="Eng J.K."/>
            <person name="Rodionov V."/>
            <person name="Han D.K."/>
        </authorList>
    </citation>
    <scope>PHOSPHORYLATION [LARGE SCALE ANALYSIS] AT SER-203; THR-217 AND SER-733</scope>
    <scope>IDENTIFICATION BY MASS SPECTROMETRY [LARGE SCALE ANALYSIS]</scope>
    <source>
        <tissue>Leukemic T-cell</tissue>
    </source>
</reference>
<reference key="19">
    <citation type="journal article" date="2010" name="Sci. Signal.">
        <title>Quantitative phosphoproteomics reveals widespread full phosphorylation site occupancy during mitosis.</title>
        <authorList>
            <person name="Olsen J.V."/>
            <person name="Vermeulen M."/>
            <person name="Santamaria A."/>
            <person name="Kumar C."/>
            <person name="Miller M.L."/>
            <person name="Jensen L.J."/>
            <person name="Gnad F."/>
            <person name="Cox J."/>
            <person name="Jensen T.S."/>
            <person name="Nigg E.A."/>
            <person name="Brunak S."/>
            <person name="Mann M."/>
        </authorList>
    </citation>
    <scope>PHOSPHORYLATION [LARGE SCALE ANALYSIS] AT SER-183; SER-194; SER-203; THR-217; SER-251; SER-265; SER-268; SER-272; SER-329; SER-332; SER-347; THR-348; THR-418; SER-730 AND SER-733</scope>
    <scope>IDENTIFICATION BY MASS SPECTROMETRY [LARGE SCALE ANALYSIS]</scope>
    <source>
        <tissue>Cervix carcinoma</tissue>
    </source>
</reference>
<reference key="20">
    <citation type="journal article" date="2011" name="BMC Syst. Biol.">
        <title>Initial characterization of the human central proteome.</title>
        <authorList>
            <person name="Burkard T.R."/>
            <person name="Planyavsky M."/>
            <person name="Kaupe I."/>
            <person name="Breitwieser F.P."/>
            <person name="Buerckstuemmer T."/>
            <person name="Bennett K.L."/>
            <person name="Superti-Furga G."/>
            <person name="Colinge J."/>
        </authorList>
    </citation>
    <scope>IDENTIFICATION BY MASS SPECTROMETRY [LARGE SCALE ANALYSIS]</scope>
</reference>
<reference key="21">
    <citation type="journal article" date="2011" name="Sci. Signal.">
        <title>System-wide temporal characterization of the proteome and phosphoproteome of human embryonic stem cell differentiation.</title>
        <authorList>
            <person name="Rigbolt K.T."/>
            <person name="Prokhorova T.A."/>
            <person name="Akimov V."/>
            <person name="Henningsen J."/>
            <person name="Johansen P.T."/>
            <person name="Kratchmarova I."/>
            <person name="Kassem M."/>
            <person name="Mann M."/>
            <person name="Olsen J.V."/>
            <person name="Blagoev B."/>
        </authorList>
    </citation>
    <scope>PHOSPHORYLATION [LARGE SCALE ANALYSIS] AT SER-183; SER-185; SER-329 AND SER-332</scope>
    <scope>IDENTIFICATION BY MASS SPECTROMETRY [LARGE SCALE ANALYSIS]</scope>
</reference>
<reference key="22">
    <citation type="journal article" date="2012" name="Proc. Natl. Acad. Sci. U.S.A.">
        <title>N-terminal acetylome analyses and functional insights of the N-terminal acetyltransferase NatB.</title>
        <authorList>
            <person name="Van Damme P."/>
            <person name="Lasa M."/>
            <person name="Polevoda B."/>
            <person name="Gazquez C."/>
            <person name="Elosegui-Artola A."/>
            <person name="Kim D.S."/>
            <person name="De Juan-Pardo E."/>
            <person name="Demeyer K."/>
            <person name="Hole K."/>
            <person name="Larrea E."/>
            <person name="Timmerman E."/>
            <person name="Prieto J."/>
            <person name="Arnesen T."/>
            <person name="Sherman F."/>
            <person name="Gevaert K."/>
            <person name="Aldabe R."/>
        </authorList>
    </citation>
    <scope>ACETYLATION [LARGE SCALE ANALYSIS] AT MET-1</scope>
    <scope>IDENTIFICATION BY MASS SPECTROMETRY [LARGE SCALE ANALYSIS]</scope>
</reference>
<reference key="23">
    <citation type="journal article" date="2013" name="J. Proteome Res.">
        <title>Toward a comprehensive characterization of a human cancer cell phosphoproteome.</title>
        <authorList>
            <person name="Zhou H."/>
            <person name="Di Palma S."/>
            <person name="Preisinger C."/>
            <person name="Peng M."/>
            <person name="Polat A.N."/>
            <person name="Heck A.J."/>
            <person name="Mohammed S."/>
        </authorList>
    </citation>
    <scope>PHOSPHORYLATION [LARGE SCALE ANALYSIS] AT SER-109; SER-183; SER-185; SER-203; THR-217; SER-238; SER-265; SER-311; THR-586; SER-588; THR-595; SER-705; SER-728; SER-730; SER-733; SER-1188 AND THR-1264</scope>
    <scope>IDENTIFICATION BY MASS SPECTROMETRY [LARGE SCALE ANALYSIS]</scope>
    <source>
        <tissue>Cervix carcinoma</tissue>
        <tissue>Erythroleukemia</tissue>
    </source>
</reference>
<reference key="24">
    <citation type="journal article" date="2014" name="J. Proteomics">
        <title>An enzyme assisted RP-RPLC approach for in-depth analysis of human liver phosphoproteome.</title>
        <authorList>
            <person name="Bian Y."/>
            <person name="Song C."/>
            <person name="Cheng K."/>
            <person name="Dong M."/>
            <person name="Wang F."/>
            <person name="Huang J."/>
            <person name="Sun D."/>
            <person name="Wang L."/>
            <person name="Ye M."/>
            <person name="Zou H."/>
        </authorList>
    </citation>
    <scope>PHOSPHORYLATION [LARGE SCALE ANALYSIS] AT SER-185; SER-203; THR-217; SER-251; SER-588; SER-732 AND SER-733</scope>
    <scope>IDENTIFICATION BY MASS SPECTROMETRY [LARGE SCALE ANALYSIS]</scope>
    <source>
        <tissue>Liver</tissue>
    </source>
</reference>
<reference key="25">
    <citation type="journal article" date="2017" name="Nat. Commun.">
        <title>TFEB regulates lysosomal positioning by modulating TMEM55B expression and JIP4 recruitment to lysosomes.</title>
        <authorList>
            <person name="Willett R."/>
            <person name="Martina J.A."/>
            <person name="Zewe J.P."/>
            <person name="Wills R."/>
            <person name="Hammond G.R.V."/>
            <person name="Puertollano R."/>
        </authorList>
    </citation>
    <scope>FUNCTION</scope>
    <scope>INTERACTION WITH PIP4P1</scope>
    <scope>SUBCELLULAR LOCATION</scope>
</reference>
<reference key="26">
    <citation type="journal article" date="2009" name="EMBO J.">
        <title>The structural basis of Arf effector specificity: the crystal structure of ARF6 in a complex with JIP4.</title>
        <authorList>
            <person name="Isabet T."/>
            <person name="Montagnac G."/>
            <person name="Regazzoni K."/>
            <person name="Raynal B."/>
            <person name="El Khadali F."/>
            <person name="England P."/>
            <person name="Franco M."/>
            <person name="Chavrier P."/>
            <person name="Houdusse A."/>
            <person name="Menetrey J."/>
        </authorList>
    </citation>
    <scope>X-RAY CRYSTALLOGRAPHY (1.93 ANGSTROMS) OF 406-476 IN COMPLEX WITH ARF6</scope>
    <scope>COILED COIL</scope>
    <scope>SUBUNIT</scope>
    <scope>INTERACTION WITH ARF6</scope>
</reference>
<keyword id="KW-0002">3D-structure</keyword>
<keyword id="KW-0007">Acetylation</keyword>
<keyword id="KW-0025">Alternative splicing</keyword>
<keyword id="KW-0175">Coiled coil</keyword>
<keyword id="KW-0963">Cytoplasm</keyword>
<keyword id="KW-0968">Cytoplasmic vesicle</keyword>
<keyword id="KW-0458">Lysosome</keyword>
<keyword id="KW-0472">Membrane</keyword>
<keyword id="KW-0597">Phosphoprotein</keyword>
<keyword id="KW-1267">Proteomics identification</keyword>
<keyword id="KW-1185">Reference proteome</keyword>
<comment type="function">
    <text evidence="2 8 12">The JNK-interacting protein (JIP) group of scaffold proteins selectively mediates JNK signaling by aggregating specific components of the MAPK cascade to form a functional JNK signaling module (PubMed:14743216). Regulates lysosomal positioning by acting as an adapter protein which links PIP4P1-positive lysosomes to the dynein-dynactin complex (PubMed:29146937). Assists PIKFYVE selective functionality in microtubule-based endosome-to-TGN trafficking (By similarity).</text>
</comment>
<comment type="activity regulation">
    <molecule>Isoform 5</molecule>
    <text evidence="9">May play a role in spermatozoa-egg-interaction.</text>
</comment>
<comment type="subunit">
    <text evidence="2 8 9 11 12">Homodimer (PubMed:19644450). The homodimer interacts with ARF6, forming a heterotetramer (PubMed:19644450). Homooligomer (PubMed:19644450). Interacts with MAX, MAPK14, MAP3K3, MYC, KNS2 and MAP2K4 (By similarity). Interaction with KNS2 is important in the formation of ternary complex with MAPK8 (By similarity). Interacts with NFKB1 (PubMed:14743216). Interacts with PIP4P1 (PubMed:29146937). Interacts with PIKFYVE (By similarity).</text>
</comment>
<comment type="subunit">
    <molecule>Isoform 5</molecule>
    <text evidence="9">Interacts with MAPK8, MAPK9, MAPK10.</text>
</comment>
<comment type="interaction">
    <interactant intactId="EBI-1023301">
        <id>O60271</id>
    </interactant>
    <interactant intactId="EBI-355383">
        <id>Q96A65</id>
        <label>EXOC4</label>
    </interactant>
    <organismsDiffer>false</organismsDiffer>
    <experiments>3</experiments>
</comment>
<comment type="interaction">
    <interactant intactId="EBI-1023301">
        <id>O60271</id>
    </interactant>
    <interactant intactId="EBI-722293">
        <id>P61006</id>
        <label>RAB8A</label>
    </interactant>
    <organismsDiffer>false</organismsDiffer>
    <experiments>3</experiments>
</comment>
<comment type="interaction">
    <interactant intactId="EBI-1023301">
        <id>O60271</id>
    </interactant>
    <interactant intactId="EBI-988682">
        <id>P62331</id>
        <label>Arf6</label>
    </interactant>
    <organismsDiffer>true</organismsDiffer>
    <experiments>2</experiments>
</comment>
<comment type="interaction">
    <interactant intactId="EBI-21502566">
        <id>O60271-2</id>
    </interactant>
    <interactant intactId="EBI-447171">
        <id>P84077</id>
        <label>ARF1</label>
    </interactant>
    <organismsDiffer>false</organismsDiffer>
    <experiments>3</experiments>
</comment>
<comment type="interaction">
    <interactant intactId="EBI-21502566">
        <id>O60271-2</id>
    </interactant>
    <interactant intactId="EBI-638181">
        <id>P62330</id>
        <label>ARF6</label>
    </interactant>
    <organismsDiffer>false</organismsDiffer>
    <experiments>8</experiments>
</comment>
<comment type="subcellular location">
    <subcellularLocation>
        <location evidence="2">Cytoplasm</location>
    </subcellularLocation>
    <subcellularLocation>
        <location evidence="2">Cytoplasm</location>
        <location evidence="2">Perinuclear region</location>
    </subcellularLocation>
    <subcellularLocation>
        <location evidence="12">Lysosome membrane</location>
    </subcellularLocation>
    <text evidence="2">Perinuclear distribution in response to stress signals such as UV radiation.</text>
</comment>
<comment type="subcellular location">
    <molecule>Isoform 5</molecule>
    <subcellularLocation>
        <location evidence="9">Cytoplasmic vesicle</location>
        <location evidence="9">Secretory vesicle</location>
        <location evidence="9">Acrosome</location>
    </subcellularLocation>
    <text evidence="9">Associated with the plasma membrane of the acrosomal compartment and also localizes in the acrosome matrix.</text>
</comment>
<comment type="alternative products">
    <event type="alternative splicing"/>
    <isoform>
        <id>O60271-1</id>
        <name>1</name>
        <name evidence="2">JLP(L)</name>
        <sequence type="displayed"/>
    </isoform>
    <isoform>
        <id>O60271-2</id>
        <name>2</name>
        <sequence type="described" ref="VSP_018214 VSP_018220"/>
    </isoform>
    <isoform>
        <id>O60271-3</id>
        <name>3</name>
        <sequence type="described" ref="VSP_018221 VSP_018222"/>
    </isoform>
    <isoform>
        <id>O60271-4</id>
        <name>4</name>
        <sequence type="described" ref="VSP_018214"/>
    </isoform>
    <isoform>
        <id>O60271-5</id>
        <name>5</name>
        <sequence type="described" ref="VSP_018214 VSP_018221 VSP_018222"/>
    </isoform>
    <isoform>
        <id>O60271-9</id>
        <name>6</name>
        <sequence type="described" ref="VSP_042253 VSP_018214 VSP_042254"/>
    </isoform>
</comment>
<comment type="tissue specificity">
    <text evidence="13">Expressed only in testis on the round spermatids of stage I, II and II. Absent in spermatogonia and spermatocyte.</text>
</comment>
<comment type="tissue specificity">
    <molecule>Isoform 4</molecule>
    <text evidence="10">Expressed in testis and in acute myeloid leukemia (AML) patients.</text>
</comment>
<comment type="tissue specificity">
    <molecule>Isoform 3</molecule>
    <text evidence="7">Expressed in testis.</text>
</comment>
<comment type="induction">
    <molecule>Isoform 3</molecule>
    <text evidence="7">Increased in systemic sclerosis fibroblasts.</text>
</comment>
<comment type="PTM">
    <text evidence="1">Phosphorylated by MAPK8 and MAPK14.</text>
</comment>
<comment type="miscellaneous">
    <molecule>Isoform 3</molecule>
    <text evidence="20">Due to intron retention.</text>
</comment>
<comment type="similarity">
    <text evidence="20">Belongs to the JIP scaffold family.</text>
</comment>
<comment type="sequence caution" evidence="20">
    <conflict type="miscellaneous discrepancy">
        <sequence resource="EMBL-CDS" id="AAH07524"/>
    </conflict>
    <text>Probable cloning artifact.</text>
</comment>
<comment type="sequence caution" evidence="20">
    <conflict type="miscellaneous discrepancy">
        <sequence resource="EMBL-CDS" id="AAH59946"/>
    </conflict>
    <text>Probable cloning artifact.</text>
</comment>
<comment type="sequence caution" evidence="20">
    <conflict type="miscellaneous discrepancy">
        <sequence resource="EMBL-CDS" id="AAI06049"/>
    </conflict>
    <text>Contaminating sequence. Sequence of unknown origin in the C-terminal part.</text>
</comment>
<comment type="sequence caution" evidence="20">
    <conflict type="erroneous initiation">
        <sequence resource="EMBL-CDS" id="AAO66462"/>
    </conflict>
    <text>Truncated N-terminus.</text>
</comment>
<comment type="sequence caution" evidence="20">
    <conflict type="erroneous initiation">
        <sequence resource="EMBL-CDS" id="BAA25442"/>
    </conflict>
    <text>Extended N-terminus.</text>
</comment>
<comment type="sequence caution" evidence="20">
    <conflict type="miscellaneous discrepancy">
        <sequence resource="EMBL-CDS" id="BAB14812"/>
    </conflict>
    <text>Unlikely isoform. Aberrant splicing.</text>
</comment>
<comment type="sequence caution" evidence="20">
    <conflict type="erroneous initiation">
        <sequence resource="EMBL-CDS" id="CAA62987"/>
    </conflict>
    <text>Truncated N-terminus.</text>
</comment>
<name>JIP4_HUMAN</name>
<protein>
    <recommendedName>
        <fullName>C-Jun-amino-terminal kinase-interacting protein 4</fullName>
        <shortName>JIP-4</shortName>
        <shortName>JNK-interacting protein 4</shortName>
    </recommendedName>
    <alternativeName>
        <fullName>Cancer/testis antigen 89</fullName>
        <shortName>CT89</shortName>
    </alternativeName>
    <alternativeName>
        <fullName>Human lung cancer oncogene 6 protein</fullName>
        <shortName>HLC-6</shortName>
    </alternativeName>
    <alternativeName>
        <fullName>JNK-associated leucine-zipper protein</fullName>
        <shortName>JLP</shortName>
    </alternativeName>
    <alternativeName>
        <fullName>Mitogen-activated protein kinase 8-interacting protein 4</fullName>
    </alternativeName>
    <alternativeName>
        <fullName>Proliferation-inducing protein 6</fullName>
    </alternativeName>
    <alternativeName>
        <fullName>Protein highly expressed in testis</fullName>
        <shortName>PHET</shortName>
    </alternativeName>
    <alternativeName>
        <fullName>Sperm surface protein</fullName>
    </alternativeName>
    <alternativeName>
        <fullName>Sperm-associated antigen 9</fullName>
    </alternativeName>
    <alternativeName>
        <fullName>Sperm-specific protein</fullName>
    </alternativeName>
    <alternativeName>
        <fullName>Sunday driver 1</fullName>
    </alternativeName>
</protein>
<feature type="chain" id="PRO_0000234076" description="C-Jun-amino-terminal kinase-interacting protein 4">
    <location>
        <begin position="1"/>
        <end position="1321"/>
    </location>
</feature>
<feature type="domain" description="RH1" evidence="4">
    <location>
        <begin position="7"/>
        <end position="95"/>
    </location>
</feature>
<feature type="domain" description="RH2" evidence="5">
    <location>
        <begin position="500"/>
        <end position="571"/>
    </location>
</feature>
<feature type="region of interest" description="Disordered" evidence="6">
    <location>
        <begin position="203"/>
        <end position="292"/>
    </location>
</feature>
<feature type="region of interest" description="Disordered" evidence="6">
    <location>
        <begin position="473"/>
        <end position="500"/>
    </location>
</feature>
<feature type="region of interest" description="Disordered" evidence="6">
    <location>
        <begin position="563"/>
        <end position="600"/>
    </location>
</feature>
<feature type="region of interest" description="Disordered" evidence="6">
    <location>
        <begin position="854"/>
        <end position="906"/>
    </location>
</feature>
<feature type="region of interest" description="Disordered" evidence="6">
    <location>
        <begin position="1239"/>
        <end position="1266"/>
    </location>
</feature>
<feature type="coiled-coil region" evidence="3">
    <location>
        <begin position="66"/>
        <end position="166"/>
    </location>
</feature>
<feature type="coiled-coil region" evidence="11">
    <location>
        <begin position="408"/>
        <end position="534"/>
    </location>
</feature>
<feature type="coiled-coil region" evidence="3">
    <location>
        <begin position="724"/>
        <end position="758"/>
    </location>
</feature>
<feature type="compositionally biased region" description="Polar residues" evidence="6">
    <location>
        <begin position="236"/>
        <end position="253"/>
    </location>
</feature>
<feature type="compositionally biased region" description="Polar residues" evidence="6">
    <location>
        <begin position="266"/>
        <end position="285"/>
    </location>
</feature>
<feature type="compositionally biased region" description="Basic and acidic residues" evidence="6">
    <location>
        <begin position="473"/>
        <end position="489"/>
    </location>
</feature>
<feature type="compositionally biased region" description="Polar residues" evidence="6">
    <location>
        <begin position="855"/>
        <end position="864"/>
    </location>
</feature>
<feature type="compositionally biased region" description="Acidic residues" evidence="6">
    <location>
        <begin position="874"/>
        <end position="883"/>
    </location>
</feature>
<feature type="compositionally biased region" description="Low complexity" evidence="6">
    <location>
        <begin position="894"/>
        <end position="903"/>
    </location>
</feature>
<feature type="modified residue" description="N-acetylmethionine" evidence="25 29">
    <location>
        <position position="1"/>
    </location>
</feature>
<feature type="modified residue" description="Phosphoserine" evidence="23 30">
    <location>
        <position position="109"/>
    </location>
</feature>
<feature type="modified residue" description="Phosphoserine" evidence="24 27 28 30">
    <location>
        <position position="183"/>
    </location>
</feature>
<feature type="modified residue" description="Phosphoserine" evidence="24 28 30 31">
    <location>
        <position position="185"/>
    </location>
</feature>
<feature type="modified residue" description="Phosphoserine" evidence="27">
    <location>
        <position position="194"/>
    </location>
</feature>
<feature type="modified residue" description="Phosphoserine" evidence="22 26 27 30 31">
    <location>
        <position position="203"/>
    </location>
</feature>
<feature type="modified residue" description="Phosphothreonine" evidence="22 24 26 27 30 31">
    <location>
        <position position="217"/>
    </location>
</feature>
<feature type="modified residue" description="Phosphoserine" evidence="30">
    <location>
        <position position="238"/>
    </location>
</feature>
<feature type="modified residue" description="Phosphoserine" evidence="27 31">
    <location>
        <position position="251"/>
    </location>
</feature>
<feature type="modified residue" description="Phosphoserine" evidence="23 27 30">
    <location>
        <position position="265"/>
    </location>
</feature>
<feature type="modified residue" description="Phosphoserine" evidence="27">
    <location>
        <position position="268"/>
    </location>
</feature>
<feature type="modified residue" description="Phosphoserine" evidence="23 27">
    <location>
        <position position="272"/>
    </location>
</feature>
<feature type="modified residue" description="Phosphothreonine" evidence="2">
    <location>
        <position position="292"/>
    </location>
</feature>
<feature type="modified residue" description="Phosphoserine" evidence="24 30">
    <location>
        <position position="311"/>
    </location>
</feature>
<feature type="modified residue" description="Phosphoserine" evidence="24 27 28">
    <location>
        <position position="329"/>
    </location>
</feature>
<feature type="modified residue" description="Phosphoserine" evidence="24 27 28">
    <location>
        <position position="332"/>
    </location>
</feature>
<feature type="modified residue" description="Phosphoserine" evidence="27">
    <location>
        <position position="347"/>
    </location>
</feature>
<feature type="modified residue" description="Phosphothreonine" evidence="27">
    <location>
        <position position="348"/>
    </location>
</feature>
<feature type="modified residue" description="Phosphothreonine" evidence="2">
    <location>
        <position position="365"/>
    </location>
</feature>
<feature type="modified residue" description="Phosphothreonine" evidence="23 24 27">
    <location>
        <position position="418"/>
    </location>
</feature>
<feature type="modified residue" description="Phosphothreonine" evidence="24 30">
    <location>
        <position position="586"/>
    </location>
</feature>
<feature type="modified residue" description="Phosphoserine" evidence="30 31">
    <location>
        <position position="588"/>
    </location>
</feature>
<feature type="modified residue" description="Phosphothreonine" evidence="30">
    <location>
        <position position="595"/>
    </location>
</feature>
<feature type="modified residue" description="Phosphoserine" evidence="30">
    <location>
        <position position="705"/>
    </location>
</feature>
<feature type="modified residue" description="Phosphoserine" evidence="30">
    <location>
        <position position="728"/>
    </location>
</feature>
<feature type="modified residue" description="Phosphoserine" evidence="27 30">
    <location>
        <position position="730"/>
    </location>
</feature>
<feature type="modified residue" description="Phosphoserine" evidence="31">
    <location>
        <position position="732"/>
    </location>
</feature>
<feature type="modified residue" description="Phosphoserine" evidence="24 26 27 30 31">
    <location>
        <position position="733"/>
    </location>
</feature>
<feature type="modified residue" description="Phosphoserine" evidence="30">
    <location>
        <position position="1188"/>
    </location>
</feature>
<feature type="modified residue" description="Phosphothreonine" evidence="30">
    <location>
        <position position="1264"/>
    </location>
</feature>
<feature type="splice variant" id="VSP_042253" description="In isoform 6." evidence="16 17">
    <original>MELEDGVVYQEEPGGSGAVMSERVSGLAGSIYREFERLIGRYDEEVVKELMPLVVAVLENLDSVFAQDQEHQVELELLRDDNEQLITQYEREKALRKHAEEKFIEFEDSQEQEKKDLQTRVESLESQTRQLELKAKNYADQISRLEEREAELKKEYNALHQRHTEMIHNYMEHLERTKLHQLSGSDQLESTAHSRI</original>
    <variation>MSPGCMLLFVFGFVGGAVVINSAILVSLSVLLLVHFSISTGVPALTQNLPRIL</variation>
    <location>
        <begin position="1"/>
        <end position="196"/>
    </location>
</feature>
<feature type="splice variant" id="VSP_018214" description="In isoform 2, isoform 4, isoform 5 and isoform 6." evidence="14 16 17 18 19">
    <location>
        <begin position="248"/>
        <end position="261"/>
    </location>
</feature>
<feature type="splice variant" id="VSP_018220" description="In isoform 2." evidence="14">
    <original>F</original>
    <variation>FVPTR</variation>
    <location>
        <position position="555"/>
    </location>
</feature>
<feature type="splice variant" id="VSP_018221" description="In isoform 3 and isoform 5." evidence="15 19">
    <original>SNDSDAYK</original>
    <variation>RYNNGSST</variation>
    <location>
        <begin position="938"/>
        <end position="945"/>
    </location>
</feature>
<feature type="splice variant" id="VSP_018222" description="In isoform 3 and isoform 5." evidence="15 19">
    <location>
        <begin position="946"/>
        <end position="1321"/>
    </location>
</feature>
<feature type="splice variant" id="VSP_042254" description="In isoform 6." evidence="16 17">
    <original>T</original>
    <variation>TVILHQGRLLGLRA</variation>
    <location>
        <position position="1175"/>
    </location>
</feature>
<feature type="sequence variant" id="VAR_059364" description="In dbSNP:rs9896965.">
    <original>N</original>
    <variation>S</variation>
    <location>
        <position position="1320"/>
    </location>
</feature>
<feature type="sequence conflict" description="In Ref. 9; AAO66462." evidence="20" ref="9">
    <original>E</original>
    <variation>G</variation>
    <location>
        <position position="451"/>
    </location>
</feature>
<feature type="sequence conflict" description="In Ref. 8; CAA62987 and 9; AAO66462." evidence="20" ref="8 9">
    <original>E</original>
    <variation>K</variation>
    <location>
        <position position="680"/>
    </location>
</feature>
<feature type="helix" evidence="32">
    <location>
        <begin position="406"/>
        <end position="465"/>
    </location>
</feature>
<feature type="sequence conflict" description="In Ref. 5; BAG58134." evidence="20" ref="5">
    <original>F</original>
    <variation>S</variation>
    <location sequence="O60271-9">
        <position position="9"/>
    </location>
</feature>
<proteinExistence type="evidence at protein level"/>